<dbReference type="EMBL" id="AE017196">
    <property type="protein sequence ID" value="AAS13829.1"/>
    <property type="molecule type" value="Genomic_DNA"/>
</dbReference>
<dbReference type="RefSeq" id="WP_010962343.1">
    <property type="nucleotide sequence ID" value="NZ_OX384529.1"/>
</dbReference>
<dbReference type="SMR" id="Q73IT2"/>
<dbReference type="EnsemblBacteria" id="AAS13829">
    <property type="protein sequence ID" value="AAS13829"/>
    <property type="gene ID" value="WD_0067"/>
</dbReference>
<dbReference type="GeneID" id="70035559"/>
<dbReference type="KEGG" id="wol:WD_0067"/>
<dbReference type="eggNOG" id="COG0102">
    <property type="taxonomic scope" value="Bacteria"/>
</dbReference>
<dbReference type="Proteomes" id="UP000008215">
    <property type="component" value="Chromosome"/>
</dbReference>
<dbReference type="GO" id="GO:0022625">
    <property type="term" value="C:cytosolic large ribosomal subunit"/>
    <property type="evidence" value="ECO:0007669"/>
    <property type="project" value="TreeGrafter"/>
</dbReference>
<dbReference type="GO" id="GO:0003729">
    <property type="term" value="F:mRNA binding"/>
    <property type="evidence" value="ECO:0007669"/>
    <property type="project" value="TreeGrafter"/>
</dbReference>
<dbReference type="GO" id="GO:0003735">
    <property type="term" value="F:structural constituent of ribosome"/>
    <property type="evidence" value="ECO:0007669"/>
    <property type="project" value="InterPro"/>
</dbReference>
<dbReference type="GO" id="GO:0017148">
    <property type="term" value="P:negative regulation of translation"/>
    <property type="evidence" value="ECO:0007669"/>
    <property type="project" value="TreeGrafter"/>
</dbReference>
<dbReference type="GO" id="GO:0006412">
    <property type="term" value="P:translation"/>
    <property type="evidence" value="ECO:0007669"/>
    <property type="project" value="UniProtKB-UniRule"/>
</dbReference>
<dbReference type="CDD" id="cd00392">
    <property type="entry name" value="Ribosomal_L13"/>
    <property type="match status" value="1"/>
</dbReference>
<dbReference type="FunFam" id="3.90.1180.10:FF:000001">
    <property type="entry name" value="50S ribosomal protein L13"/>
    <property type="match status" value="1"/>
</dbReference>
<dbReference type="Gene3D" id="3.90.1180.10">
    <property type="entry name" value="Ribosomal protein L13"/>
    <property type="match status" value="1"/>
</dbReference>
<dbReference type="HAMAP" id="MF_01366">
    <property type="entry name" value="Ribosomal_uL13"/>
    <property type="match status" value="1"/>
</dbReference>
<dbReference type="InterPro" id="IPR005822">
    <property type="entry name" value="Ribosomal_uL13"/>
</dbReference>
<dbReference type="InterPro" id="IPR005823">
    <property type="entry name" value="Ribosomal_uL13_bac-type"/>
</dbReference>
<dbReference type="InterPro" id="IPR036899">
    <property type="entry name" value="Ribosomal_uL13_sf"/>
</dbReference>
<dbReference type="NCBIfam" id="TIGR01066">
    <property type="entry name" value="rplM_bact"/>
    <property type="match status" value="1"/>
</dbReference>
<dbReference type="PANTHER" id="PTHR11545:SF2">
    <property type="entry name" value="LARGE RIBOSOMAL SUBUNIT PROTEIN UL13M"/>
    <property type="match status" value="1"/>
</dbReference>
<dbReference type="PANTHER" id="PTHR11545">
    <property type="entry name" value="RIBOSOMAL PROTEIN L13"/>
    <property type="match status" value="1"/>
</dbReference>
<dbReference type="Pfam" id="PF00572">
    <property type="entry name" value="Ribosomal_L13"/>
    <property type="match status" value="1"/>
</dbReference>
<dbReference type="PIRSF" id="PIRSF002181">
    <property type="entry name" value="Ribosomal_L13"/>
    <property type="match status" value="1"/>
</dbReference>
<dbReference type="SUPFAM" id="SSF52161">
    <property type="entry name" value="Ribosomal protein L13"/>
    <property type="match status" value="1"/>
</dbReference>
<accession>Q73IT2</accession>
<gene>
    <name evidence="1" type="primary">rplM</name>
    <name type="ordered locus">WD_0067</name>
</gene>
<organism>
    <name type="scientific">Wolbachia pipientis wMel</name>
    <dbReference type="NCBI Taxonomy" id="163164"/>
    <lineage>
        <taxon>Bacteria</taxon>
        <taxon>Pseudomonadati</taxon>
        <taxon>Pseudomonadota</taxon>
        <taxon>Alphaproteobacteria</taxon>
        <taxon>Rickettsiales</taxon>
        <taxon>Anaplasmataceae</taxon>
        <taxon>Wolbachieae</taxon>
        <taxon>Wolbachia</taxon>
    </lineage>
</organism>
<name>RL13_WOLPM</name>
<proteinExistence type="inferred from homology"/>
<protein>
    <recommendedName>
        <fullName evidence="1">Large ribosomal subunit protein uL13</fullName>
    </recommendedName>
    <alternativeName>
        <fullName evidence="2">50S ribosomal protein L13</fullName>
    </alternativeName>
</protein>
<comment type="function">
    <text evidence="1">This protein is one of the early assembly proteins of the 50S ribosomal subunit, although it is not seen to bind rRNA by itself. It is important during the early stages of 50S assembly.</text>
</comment>
<comment type="subunit">
    <text evidence="1">Part of the 50S ribosomal subunit.</text>
</comment>
<comment type="similarity">
    <text evidence="1">Belongs to the universal ribosomal protein uL13 family.</text>
</comment>
<keyword id="KW-0687">Ribonucleoprotein</keyword>
<keyword id="KW-0689">Ribosomal protein</keyword>
<feature type="chain" id="PRO_1000055491" description="Large ribosomal subunit protein uL13">
    <location>
        <begin position="1"/>
        <end position="152"/>
    </location>
</feature>
<evidence type="ECO:0000255" key="1">
    <source>
        <dbReference type="HAMAP-Rule" id="MF_01366"/>
    </source>
</evidence>
<evidence type="ECO:0000305" key="2"/>
<sequence>MKTFFLKEKQINKKWFVIDAEGLVVGRLAAFVATLLRGKHKPEYTPHMDCGDNVIIINAERVHFTGKKLKDKIYYKHTGYSGGLKKTTPDNILNGKFPERVIEMAVKRMLDDGPMARRRFENLYVYSGSEHKHQGQQPEKIDFASLNRKNKK</sequence>
<reference key="1">
    <citation type="journal article" date="2004" name="PLoS Biol.">
        <title>Phylogenomics of the reproductive parasite Wolbachia pipientis wMel: a streamlined genome overrun by mobile genetic elements.</title>
        <authorList>
            <person name="Wu M."/>
            <person name="Sun L.V."/>
            <person name="Vamathevan J.J."/>
            <person name="Riegler M."/>
            <person name="DeBoy R.T."/>
            <person name="Brownlie J.C."/>
            <person name="McGraw E.A."/>
            <person name="Martin W."/>
            <person name="Esser C."/>
            <person name="Ahmadinejad N."/>
            <person name="Wiegand C."/>
            <person name="Madupu R."/>
            <person name="Beanan M.J."/>
            <person name="Brinkac L.M."/>
            <person name="Daugherty S.C."/>
            <person name="Durkin A.S."/>
            <person name="Kolonay J.F."/>
            <person name="Nelson W.C."/>
            <person name="Mohamoud Y."/>
            <person name="Lee P."/>
            <person name="Berry K.J."/>
            <person name="Young M.B."/>
            <person name="Utterback T.R."/>
            <person name="Weidman J.F."/>
            <person name="Nierman W.C."/>
            <person name="Paulsen I.T."/>
            <person name="Nelson K.E."/>
            <person name="Tettelin H."/>
            <person name="O'Neill S.L."/>
            <person name="Eisen J.A."/>
        </authorList>
    </citation>
    <scope>NUCLEOTIDE SEQUENCE [LARGE SCALE GENOMIC DNA]</scope>
</reference>